<keyword id="KW-0002">3D-structure</keyword>
<keyword id="KW-0460">Magnesium</keyword>
<keyword id="KW-0479">Metal-binding</keyword>
<sequence>MTPTIITDVKSFAIKPDRHNLVVVKVETNKGISGLGCSTFQFRPLAVKTVVDEYLRPLLMGRDANEIEDIWQVMNVNSYWRNGPITNNAISGIDMALWDIKGQLADMPLYQLLGGKARTAIPAYTHAVADNLDDLYHEIDRFLAAGYRYIRCQLGFYGGNPSQLQTPEEPISGSYFDQTDYMETTLKMFAAIKEKYGNQFQMLHDVHERLHPNQAIQFAKAAEPYQLFFLEDILPPDQSHWLTQLRSQSATPIATGELFNNPMEWQELVKNRQIDFMRAHVSQIGGITPALKLAHFCDAMGVRIAWHTPSDISPVGLAVNTHLNIHLHNAAIQETIELPANTQSVFVGSPQPKGGFFYPMEKSGIGITFDEEAAADFPVVYRPHEWTQSRTPDGTLITP</sequence>
<accession>C8ZZN2</accession>
<protein>
    <recommendedName>
        <fullName>D-galactonate dehydratase family member EGBG_01401</fullName>
    </recommendedName>
</protein>
<organism>
    <name type="scientific">Enterococcus gallinarum (strain EG2)</name>
    <dbReference type="NCBI Taxonomy" id="565653"/>
    <lineage>
        <taxon>Bacteria</taxon>
        <taxon>Bacillati</taxon>
        <taxon>Bacillota</taxon>
        <taxon>Bacilli</taxon>
        <taxon>Lactobacillales</taxon>
        <taxon>Enterococcaceae</taxon>
        <taxon>Enterococcus</taxon>
    </lineage>
</organism>
<proteinExistence type="evidence at protein level"/>
<feature type="chain" id="PRO_0000429908" description="D-galactonate dehydratase family member EGBG_01401">
    <location>
        <begin position="1"/>
        <end position="399"/>
    </location>
</feature>
<feature type="binding site" evidence="2">
    <location>
        <position position="205"/>
    </location>
    <ligand>
        <name>Mg(2+)</name>
        <dbReference type="ChEBI" id="CHEBI:18420"/>
    </ligand>
</feature>
<feature type="binding site" evidence="1">
    <location>
        <position position="207"/>
    </location>
    <ligand>
        <name>D-arabinonate</name>
        <dbReference type="ChEBI" id="CHEBI:16157"/>
    </ligand>
</feature>
<feature type="binding site" evidence="2">
    <location>
        <position position="231"/>
    </location>
    <ligand>
        <name>Mg(2+)</name>
        <dbReference type="ChEBI" id="CHEBI:18420"/>
    </ligand>
</feature>
<feature type="binding site" evidence="1">
    <location>
        <position position="257"/>
    </location>
    <ligand>
        <name>D-arabinonate</name>
        <dbReference type="ChEBI" id="CHEBI:16157"/>
    </ligand>
</feature>
<feature type="binding site" evidence="2">
    <location>
        <position position="257"/>
    </location>
    <ligand>
        <name>Mg(2+)</name>
        <dbReference type="ChEBI" id="CHEBI:18420"/>
    </ligand>
</feature>
<feature type="binding site" evidence="1">
    <location>
        <position position="278"/>
    </location>
    <ligand>
        <name>D-arabinonate</name>
        <dbReference type="ChEBI" id="CHEBI:16157"/>
    </ligand>
</feature>
<feature type="binding site" evidence="1">
    <location>
        <position position="307"/>
    </location>
    <ligand>
        <name>D-arabinonate</name>
        <dbReference type="ChEBI" id="CHEBI:16157"/>
    </ligand>
</feature>
<feature type="binding site" evidence="1">
    <location>
        <position position="334"/>
    </location>
    <ligand>
        <name>D-arabinonate</name>
        <dbReference type="ChEBI" id="CHEBI:16157"/>
    </ligand>
</feature>
<feature type="strand" evidence="4">
    <location>
        <begin position="5"/>
        <end position="14"/>
    </location>
</feature>
<feature type="strand" evidence="4">
    <location>
        <begin position="16"/>
        <end position="19"/>
    </location>
</feature>
<feature type="strand" evidence="4">
    <location>
        <begin position="21"/>
        <end position="28"/>
    </location>
</feature>
<feature type="strand" evidence="4">
    <location>
        <begin position="34"/>
        <end position="37"/>
    </location>
</feature>
<feature type="helix" evidence="4">
    <location>
        <begin position="44"/>
        <end position="53"/>
    </location>
</feature>
<feature type="helix" evidence="4">
    <location>
        <begin position="55"/>
        <end position="59"/>
    </location>
</feature>
<feature type="helix" evidence="4">
    <location>
        <begin position="67"/>
        <end position="76"/>
    </location>
</feature>
<feature type="helix" evidence="4">
    <location>
        <begin position="84"/>
        <end position="105"/>
    </location>
</feature>
<feature type="helix" evidence="4">
    <location>
        <begin position="109"/>
        <end position="112"/>
    </location>
</feature>
<feature type="strand" evidence="4">
    <location>
        <begin position="117"/>
        <end position="119"/>
    </location>
</feature>
<feature type="strand" evidence="4">
    <location>
        <begin position="121"/>
        <end position="131"/>
    </location>
</feature>
<feature type="helix" evidence="4">
    <location>
        <begin position="132"/>
        <end position="144"/>
    </location>
</feature>
<feature type="strand" evidence="4">
    <location>
        <begin position="148"/>
        <end position="155"/>
    </location>
</feature>
<feature type="helix" evidence="4">
    <location>
        <begin position="161"/>
        <end position="163"/>
    </location>
</feature>
<feature type="strand" evidence="4">
    <location>
        <begin position="172"/>
        <end position="175"/>
    </location>
</feature>
<feature type="helix" evidence="4">
    <location>
        <begin position="178"/>
        <end position="196"/>
    </location>
</feature>
<feature type="strand" evidence="4">
    <location>
        <begin position="199"/>
        <end position="205"/>
    </location>
</feature>
<feature type="helix" evidence="4">
    <location>
        <begin position="212"/>
        <end position="222"/>
    </location>
</feature>
<feature type="helix" evidence="4">
    <location>
        <begin position="223"/>
        <end position="225"/>
    </location>
</feature>
<feature type="strand" evidence="4">
    <location>
        <begin position="228"/>
        <end position="231"/>
    </location>
</feature>
<feature type="helix" evidence="4">
    <location>
        <begin position="236"/>
        <end position="241"/>
    </location>
</feature>
<feature type="helix" evidence="4">
    <location>
        <begin position="242"/>
        <end position="246"/>
    </location>
</feature>
<feature type="strand" evidence="4">
    <location>
        <begin position="253"/>
        <end position="255"/>
    </location>
</feature>
<feature type="helix" evidence="4">
    <location>
        <begin position="262"/>
        <end position="264"/>
    </location>
</feature>
<feature type="helix" evidence="4">
    <location>
        <begin position="266"/>
        <end position="270"/>
    </location>
</feature>
<feature type="strand" evidence="4">
    <location>
        <begin position="275"/>
        <end position="277"/>
    </location>
</feature>
<feature type="helix" evidence="4">
    <location>
        <begin position="281"/>
        <end position="284"/>
    </location>
</feature>
<feature type="helix" evidence="4">
    <location>
        <begin position="287"/>
        <end position="299"/>
    </location>
</feature>
<feature type="strand" evidence="4">
    <location>
        <begin position="310"/>
        <end position="312"/>
    </location>
</feature>
<feature type="helix" evidence="4">
    <location>
        <begin position="314"/>
        <end position="326"/>
    </location>
</feature>
<feature type="helix" evidence="4">
    <location>
        <begin position="340"/>
        <end position="345"/>
    </location>
</feature>
<feature type="strand" evidence="4">
    <location>
        <begin position="362"/>
        <end position="365"/>
    </location>
</feature>
<feature type="helix" evidence="4">
    <location>
        <begin position="371"/>
        <end position="374"/>
    </location>
</feature>
<feature type="helix" evidence="4">
    <location>
        <begin position="385"/>
        <end position="387"/>
    </location>
</feature>
<feature type="strand" evidence="4">
    <location>
        <begin position="388"/>
        <end position="390"/>
    </location>
</feature>
<name>IMND1_ENTGE</name>
<gene>
    <name type="ORF">EGBG_01401</name>
</gene>
<dbReference type="EMBL" id="GG670287">
    <property type="protein sequence ID" value="EEV32799.1"/>
    <property type="molecule type" value="Genomic_DNA"/>
</dbReference>
<dbReference type="RefSeq" id="WP_003127127.1">
    <property type="nucleotide sequence ID" value="NZ_GG670287.1"/>
</dbReference>
<dbReference type="PDB" id="4HNL">
    <property type="method" value="X-ray"/>
    <property type="resolution" value="1.48 A"/>
    <property type="chains" value="A=1-399"/>
</dbReference>
<dbReference type="PDBsum" id="4HNL"/>
<dbReference type="SMR" id="C8ZZN2"/>
<dbReference type="eggNOG" id="COG4948">
    <property type="taxonomic scope" value="Bacteria"/>
</dbReference>
<dbReference type="HOGENOM" id="CLU_030273_6_1_9"/>
<dbReference type="EvolutionaryTrace" id="C8ZZN2"/>
<dbReference type="GO" id="GO:0000287">
    <property type="term" value="F:magnesium ion binding"/>
    <property type="evidence" value="ECO:0000314"/>
    <property type="project" value="UniProtKB"/>
</dbReference>
<dbReference type="GO" id="GO:0009063">
    <property type="term" value="P:amino acid catabolic process"/>
    <property type="evidence" value="ECO:0007669"/>
    <property type="project" value="InterPro"/>
</dbReference>
<dbReference type="FunFam" id="3.20.20.120:FF:000011">
    <property type="entry name" value="D-galactonate dehydratase family member VSWAT3_13707"/>
    <property type="match status" value="1"/>
</dbReference>
<dbReference type="Gene3D" id="3.20.20.120">
    <property type="entry name" value="Enolase-like C-terminal domain"/>
    <property type="match status" value="1"/>
</dbReference>
<dbReference type="Gene3D" id="3.30.390.10">
    <property type="entry name" value="Enolase-like, N-terminal domain"/>
    <property type="match status" value="1"/>
</dbReference>
<dbReference type="InterPro" id="IPR034593">
    <property type="entry name" value="DgoD-like"/>
</dbReference>
<dbReference type="InterPro" id="IPR036849">
    <property type="entry name" value="Enolase-like_C_sf"/>
</dbReference>
<dbReference type="InterPro" id="IPR029017">
    <property type="entry name" value="Enolase-like_N"/>
</dbReference>
<dbReference type="InterPro" id="IPR029065">
    <property type="entry name" value="Enolase_C-like"/>
</dbReference>
<dbReference type="InterPro" id="IPR018110">
    <property type="entry name" value="Mandel_Rmase/mucon_lact_enz_CS"/>
</dbReference>
<dbReference type="InterPro" id="IPR013342">
    <property type="entry name" value="Mandelate_racemase_C"/>
</dbReference>
<dbReference type="InterPro" id="IPR013341">
    <property type="entry name" value="Mandelate_racemase_N_dom"/>
</dbReference>
<dbReference type="PANTHER" id="PTHR48080">
    <property type="entry name" value="D-GALACTONATE DEHYDRATASE-RELATED"/>
    <property type="match status" value="1"/>
</dbReference>
<dbReference type="PANTHER" id="PTHR48080:SF6">
    <property type="entry name" value="STARVATION-SENSING PROTEIN RSPA"/>
    <property type="match status" value="1"/>
</dbReference>
<dbReference type="Pfam" id="PF13378">
    <property type="entry name" value="MR_MLE_C"/>
    <property type="match status" value="1"/>
</dbReference>
<dbReference type="Pfam" id="PF02746">
    <property type="entry name" value="MR_MLE_N"/>
    <property type="match status" value="1"/>
</dbReference>
<dbReference type="SMART" id="SM00922">
    <property type="entry name" value="MR_MLE"/>
    <property type="match status" value="1"/>
</dbReference>
<dbReference type="SUPFAM" id="SSF51604">
    <property type="entry name" value="Enolase C-terminal domain-like"/>
    <property type="match status" value="1"/>
</dbReference>
<dbReference type="SUPFAM" id="SSF54826">
    <property type="entry name" value="Enolase N-terminal domain-like"/>
    <property type="match status" value="1"/>
</dbReference>
<dbReference type="PROSITE" id="PS00908">
    <property type="entry name" value="MR_MLE_1"/>
    <property type="match status" value="1"/>
</dbReference>
<comment type="function">
    <text evidence="2">Has no detectable activity with D-mannonate and with a panel of 70 other acid sugars (in vitro), in spite of the conservation of the residues that are expected to be important for catalytic activity and cofactor binding. May have evolved a divergent function.</text>
</comment>
<comment type="similarity">
    <text evidence="3">Belongs to the mandelate racemase/muconate lactonizing enzyme family. GalD subfamily.</text>
</comment>
<evidence type="ECO:0000250" key="1"/>
<evidence type="ECO:0000269" key="2">
    <source>
    </source>
</evidence>
<evidence type="ECO:0000305" key="3"/>
<evidence type="ECO:0007829" key="4">
    <source>
        <dbReference type="PDB" id="4HNL"/>
    </source>
</evidence>
<reference key="1">
    <citation type="submission" date="2009-02" db="EMBL/GenBank/DDBJ databases">
        <title>The genome sequence of Enterococcus gallinarum strain EG2 (1,134,897).</title>
        <authorList>
            <consortium name="The Broad Institute Genome Sequencing Platform"/>
            <person name="Feldgarden M."/>
            <person name="Young S.K."/>
            <person name="Kodira C.D."/>
            <person name="Zeng Q."/>
            <person name="Koehrsen M."/>
            <person name="Alvarado L."/>
            <person name="Berlin A."/>
            <person name="Borenstein D."/>
            <person name="Chen Z."/>
            <person name="Engels R."/>
            <person name="Freedman E."/>
            <person name="Gellesch M."/>
            <person name="Goldberg J."/>
            <person name="Griggs A."/>
            <person name="Gujja S."/>
            <person name="Heiman D."/>
            <person name="Hepburn T."/>
            <person name="Howarth C."/>
            <person name="Jen D."/>
            <person name="Larson L."/>
            <person name="Lewis B."/>
            <person name="Mehta T."/>
            <person name="Park D."/>
            <person name="Pearson M."/>
            <person name="Roberts A."/>
            <person name="Saif S."/>
            <person name="Shea T."/>
            <person name="Shenoy N."/>
            <person name="Sisk P."/>
            <person name="Stolte C."/>
            <person name="Sykes S."/>
            <person name="Walk T."/>
            <person name="White J."/>
            <person name="Yandava C."/>
            <person name="Gilmore M."/>
            <person name="Manson J."/>
            <person name="Palmer K."/>
            <person name="Carniol K."/>
            <person name="Lander E."/>
            <person name="Nusbaum C."/>
            <person name="Galagan J."/>
            <person name="Birren B."/>
        </authorList>
    </citation>
    <scope>NUCLEOTIDE SEQUENCE [LARGE SCALE GENOMIC DNA]</scope>
    <source>
        <strain>EG2</strain>
    </source>
</reference>
<reference key="2">
    <citation type="journal article" date="2014" name="Biochemistry">
        <title>Discovery of function in the enolase superfamily: D-mannonate and D-gluconate dehydratases in the D-mannonate dehydratase subgroup.</title>
        <authorList>
            <person name="Wichelecki D.J."/>
            <person name="Balthazor B.M."/>
            <person name="Chau A.C."/>
            <person name="Vetting M.W."/>
            <person name="Fedorov A.A."/>
            <person name="Fedorov E.V."/>
            <person name="Lukk T."/>
            <person name="Patskovsky Y.V."/>
            <person name="Stead M.B."/>
            <person name="Hillerich B.S."/>
            <person name="Seidel R.D."/>
            <person name="Almo S.C."/>
            <person name="Gerlt J.A."/>
        </authorList>
    </citation>
    <scope>X-RAY CRYSTALLOGRAPHY (1.48 ANGSTROMS) IN COMPLEX WITH MAGNESIUM</scope>
    <scope>FUNCTION</scope>
    <scope>LACK OF D-MANNONATE DEHYDRATASE ACTIVITY</scope>
    <source>
        <strain>EG2</strain>
    </source>
</reference>